<comment type="function">
    <text evidence="1">Binds 23S rRNA and is also seen to make contacts with the A and possibly P site tRNAs.</text>
</comment>
<comment type="subunit">
    <text evidence="1">Part of the 50S ribosomal subunit.</text>
</comment>
<comment type="similarity">
    <text evidence="2">Belongs to the universal ribosomal protein uL16 family.</text>
</comment>
<name>RL16_CARRP</name>
<dbReference type="EMBL" id="AP009180">
    <property type="protein sequence ID" value="BAF35180.1"/>
    <property type="molecule type" value="Genomic_DNA"/>
</dbReference>
<dbReference type="RefSeq" id="WP_011672372.1">
    <property type="nucleotide sequence ID" value="NC_008512.1"/>
</dbReference>
<dbReference type="SMR" id="Q05FJ1"/>
<dbReference type="STRING" id="387662.CRP_149"/>
<dbReference type="KEGG" id="crp:CRP_149"/>
<dbReference type="HOGENOM" id="CLU_078858_2_1_6"/>
<dbReference type="OrthoDB" id="9802589at2"/>
<dbReference type="Proteomes" id="UP000000777">
    <property type="component" value="Chromosome"/>
</dbReference>
<dbReference type="GO" id="GO:1990904">
    <property type="term" value="C:ribonucleoprotein complex"/>
    <property type="evidence" value="ECO:0007669"/>
    <property type="project" value="UniProtKB-KW"/>
</dbReference>
<dbReference type="GO" id="GO:0005840">
    <property type="term" value="C:ribosome"/>
    <property type="evidence" value="ECO:0007669"/>
    <property type="project" value="UniProtKB-KW"/>
</dbReference>
<dbReference type="GO" id="GO:0019843">
    <property type="term" value="F:rRNA binding"/>
    <property type="evidence" value="ECO:0007669"/>
    <property type="project" value="UniProtKB-KW"/>
</dbReference>
<dbReference type="GO" id="GO:0003735">
    <property type="term" value="F:structural constituent of ribosome"/>
    <property type="evidence" value="ECO:0007669"/>
    <property type="project" value="InterPro"/>
</dbReference>
<dbReference type="GO" id="GO:0000049">
    <property type="term" value="F:tRNA binding"/>
    <property type="evidence" value="ECO:0007669"/>
    <property type="project" value="UniProtKB-KW"/>
</dbReference>
<dbReference type="GO" id="GO:0006412">
    <property type="term" value="P:translation"/>
    <property type="evidence" value="ECO:0007669"/>
    <property type="project" value="InterPro"/>
</dbReference>
<dbReference type="CDD" id="cd01433">
    <property type="entry name" value="Ribosomal_L16_L10e"/>
    <property type="match status" value="1"/>
</dbReference>
<dbReference type="Gene3D" id="3.90.1170.10">
    <property type="entry name" value="Ribosomal protein L10e/L16"/>
    <property type="match status" value="1"/>
</dbReference>
<dbReference type="InterPro" id="IPR047873">
    <property type="entry name" value="Ribosomal_uL16"/>
</dbReference>
<dbReference type="InterPro" id="IPR000114">
    <property type="entry name" value="Ribosomal_uL16_bact-type"/>
</dbReference>
<dbReference type="InterPro" id="IPR020798">
    <property type="entry name" value="Ribosomal_uL16_CS"/>
</dbReference>
<dbReference type="InterPro" id="IPR016180">
    <property type="entry name" value="Ribosomal_uL16_dom"/>
</dbReference>
<dbReference type="InterPro" id="IPR036920">
    <property type="entry name" value="Ribosomal_uL16_sf"/>
</dbReference>
<dbReference type="NCBIfam" id="TIGR01164">
    <property type="entry name" value="rplP_bact"/>
    <property type="match status" value="1"/>
</dbReference>
<dbReference type="PANTHER" id="PTHR12220">
    <property type="entry name" value="50S/60S RIBOSOMAL PROTEIN L16"/>
    <property type="match status" value="1"/>
</dbReference>
<dbReference type="PANTHER" id="PTHR12220:SF13">
    <property type="entry name" value="LARGE RIBOSOMAL SUBUNIT PROTEIN UL16M"/>
    <property type="match status" value="1"/>
</dbReference>
<dbReference type="Pfam" id="PF00252">
    <property type="entry name" value="Ribosomal_L16"/>
    <property type="match status" value="1"/>
</dbReference>
<dbReference type="PRINTS" id="PR00060">
    <property type="entry name" value="RIBOSOMALL16"/>
</dbReference>
<dbReference type="SUPFAM" id="SSF54686">
    <property type="entry name" value="Ribosomal protein L16p/L10e"/>
    <property type="match status" value="1"/>
</dbReference>
<dbReference type="PROSITE" id="PS00701">
    <property type="entry name" value="RIBOSOMAL_L16_2"/>
    <property type="match status" value="1"/>
</dbReference>
<accession>Q05FJ1</accession>
<proteinExistence type="inferred from homology"/>
<protein>
    <recommendedName>
        <fullName evidence="2">Large ribosomal subunit protein uL16</fullName>
    </recommendedName>
    <alternativeName>
        <fullName>50S ribosomal protein L16</fullName>
    </alternativeName>
</protein>
<keyword id="KW-0687">Ribonucleoprotein</keyword>
<keyword id="KW-0689">Ribosomal protein</keyword>
<keyword id="KW-0694">RNA-binding</keyword>
<keyword id="KW-0699">rRNA-binding</keyword>
<keyword id="KW-0820">tRNA-binding</keyword>
<evidence type="ECO:0000250" key="1"/>
<evidence type="ECO:0000305" key="2"/>
<reference key="1">
    <citation type="journal article" date="2006" name="Science">
        <title>The 160-kilobase genome of the bacterial endosymbiont Carsonella.</title>
        <authorList>
            <person name="Nakabachi A."/>
            <person name="Yamashita A."/>
            <person name="Toh H."/>
            <person name="Ishikawa H."/>
            <person name="Dunbar H.E."/>
            <person name="Moran N.A."/>
            <person name="Hattori M."/>
        </authorList>
    </citation>
    <scope>NUCLEOTIDE SEQUENCE [LARGE SCALE GENOMIC DNA]</scope>
    <source>
        <strain>PV</strain>
    </source>
</reference>
<feature type="chain" id="PRO_0000354600" description="Large ribosomal subunit protein uL16">
    <location>
        <begin position="1"/>
        <end position="135"/>
    </location>
</feature>
<gene>
    <name type="primary">rplP</name>
    <name type="ordered locus">CRP_149</name>
</gene>
<sequence length="135" mass="15753">MKNKPDQLKYSKYQKNRNKGFSTKRNYLIHGNYGLKSIENGFLNFKQIESARKMLIHFLGKSSKILIRVFPDKVLTKKPLEVRMGKGKGPIYDWVSVIKPGIILFEVLNFNYLIVKKAFYVASQKLSIKTEICYE</sequence>
<organism>
    <name type="scientific">Carsonella ruddii (strain PV)</name>
    <dbReference type="NCBI Taxonomy" id="387662"/>
    <lineage>
        <taxon>Bacteria</taxon>
        <taxon>Pseudomonadati</taxon>
        <taxon>Pseudomonadota</taxon>
        <taxon>Gammaproteobacteria</taxon>
        <taxon>Oceanospirillales</taxon>
        <taxon>Halomonadaceae</taxon>
        <taxon>Zymobacter group</taxon>
        <taxon>Candidatus Carsonella</taxon>
    </lineage>
</organism>